<keyword id="KW-0106">Calcium</keyword>
<keyword id="KW-0963">Cytoplasm</keyword>
<keyword id="KW-0472">Membrane</keyword>
<keyword id="KW-0479">Metal-binding</keyword>
<keyword id="KW-1185">Reference proteome</keyword>
<keyword id="KW-0677">Repeat</keyword>
<evidence type="ECO:0000255" key="1">
    <source>
        <dbReference type="PROSITE-ProRule" id="PRU00041"/>
    </source>
</evidence>
<evidence type="ECO:0000256" key="2">
    <source>
        <dbReference type="SAM" id="MobiDB-lite"/>
    </source>
</evidence>
<evidence type="ECO:0000269" key="3">
    <source>
    </source>
</evidence>
<evidence type="ECO:0000269" key="4">
    <source>
    </source>
</evidence>
<evidence type="ECO:0000305" key="5"/>
<name>CPNA_DICDI</name>
<reference key="1">
    <citation type="journal article" date="2005" name="BMC Cell Biol.">
        <title>Copine A, a calcium-dependent membrane-binding protein, transiently localizes to the plasma membrane and intracellular vacuoles in Dictyostelium.</title>
        <authorList>
            <person name="Damer C.K."/>
            <person name="Bayeva M."/>
            <person name="Hahn E.S."/>
            <person name="Rivera J."/>
            <person name="Socec C.I."/>
        </authorList>
    </citation>
    <scope>NUCLEOTIDE SEQUENCE [MRNA]</scope>
    <scope>SUBCELLULAR LOCATION</scope>
</reference>
<reference key="2">
    <citation type="journal article" date="2005" name="Nature">
        <title>The genome of the social amoeba Dictyostelium discoideum.</title>
        <authorList>
            <person name="Eichinger L."/>
            <person name="Pachebat J.A."/>
            <person name="Gloeckner G."/>
            <person name="Rajandream M.A."/>
            <person name="Sucgang R."/>
            <person name="Berriman M."/>
            <person name="Song J."/>
            <person name="Olsen R."/>
            <person name="Szafranski K."/>
            <person name="Xu Q."/>
            <person name="Tunggal B."/>
            <person name="Kummerfeld S."/>
            <person name="Madera M."/>
            <person name="Konfortov B.A."/>
            <person name="Rivero F."/>
            <person name="Bankier A.T."/>
            <person name="Lehmann R."/>
            <person name="Hamlin N."/>
            <person name="Davies R."/>
            <person name="Gaudet P."/>
            <person name="Fey P."/>
            <person name="Pilcher K."/>
            <person name="Chen G."/>
            <person name="Saunders D."/>
            <person name="Sodergren E.J."/>
            <person name="Davis P."/>
            <person name="Kerhornou A."/>
            <person name="Nie X."/>
            <person name="Hall N."/>
            <person name="Anjard C."/>
            <person name="Hemphill L."/>
            <person name="Bason N."/>
            <person name="Farbrother P."/>
            <person name="Desany B."/>
            <person name="Just E."/>
            <person name="Morio T."/>
            <person name="Rost R."/>
            <person name="Churcher C.M."/>
            <person name="Cooper J."/>
            <person name="Haydock S."/>
            <person name="van Driessche N."/>
            <person name="Cronin A."/>
            <person name="Goodhead I."/>
            <person name="Muzny D.M."/>
            <person name="Mourier T."/>
            <person name="Pain A."/>
            <person name="Lu M."/>
            <person name="Harper D."/>
            <person name="Lindsay R."/>
            <person name="Hauser H."/>
            <person name="James K.D."/>
            <person name="Quiles M."/>
            <person name="Madan Babu M."/>
            <person name="Saito T."/>
            <person name="Buchrieser C."/>
            <person name="Wardroper A."/>
            <person name="Felder M."/>
            <person name="Thangavelu M."/>
            <person name="Johnson D."/>
            <person name="Knights A."/>
            <person name="Loulseged H."/>
            <person name="Mungall K.L."/>
            <person name="Oliver K."/>
            <person name="Price C."/>
            <person name="Quail M.A."/>
            <person name="Urushihara H."/>
            <person name="Hernandez J."/>
            <person name="Rabbinowitsch E."/>
            <person name="Steffen D."/>
            <person name="Sanders M."/>
            <person name="Ma J."/>
            <person name="Kohara Y."/>
            <person name="Sharp S."/>
            <person name="Simmonds M.N."/>
            <person name="Spiegler S."/>
            <person name="Tivey A."/>
            <person name="Sugano S."/>
            <person name="White B."/>
            <person name="Walker D."/>
            <person name="Woodward J.R."/>
            <person name="Winckler T."/>
            <person name="Tanaka Y."/>
            <person name="Shaulsky G."/>
            <person name="Schleicher M."/>
            <person name="Weinstock G.M."/>
            <person name="Rosenthal A."/>
            <person name="Cox E.C."/>
            <person name="Chisholm R.L."/>
            <person name="Gibbs R.A."/>
            <person name="Loomis W.F."/>
            <person name="Platzer M."/>
            <person name="Kay R.R."/>
            <person name="Williams J.G."/>
            <person name="Dear P.H."/>
            <person name="Noegel A.A."/>
            <person name="Barrell B.G."/>
            <person name="Kuspa A."/>
        </authorList>
    </citation>
    <scope>NUCLEOTIDE SEQUENCE [LARGE SCALE GENOMIC DNA]</scope>
    <source>
        <strain>AX4</strain>
    </source>
</reference>
<reference key="3">
    <citation type="journal article" date="2007" name="Eukaryot. Cell">
        <title>Copine A is required for cytokinesis, contractile vacuole function, and development in Dictyostelium.</title>
        <authorList>
            <person name="Damer C.K."/>
            <person name="Bayeva M."/>
            <person name="Kim P.S."/>
            <person name="Ho L.K."/>
            <person name="Eberhardt E.S."/>
            <person name="Socec C.I."/>
            <person name="Lee J.S."/>
            <person name="Bruce E.A."/>
            <person name="Goldman-Yassen A.E."/>
            <person name="Naliboff L.C."/>
        </authorList>
    </citation>
    <scope>FUNCTION</scope>
    <scope>DEVELOPMENTAL STAGE</scope>
    <scope>DISRUPTION PHENOTYPE</scope>
</reference>
<gene>
    <name type="primary">cpnA</name>
    <name type="ORF">DDB_G0293008</name>
</gene>
<feature type="chain" id="PRO_0000330654" description="Copine-A">
    <location>
        <begin position="1"/>
        <end position="600"/>
    </location>
</feature>
<feature type="domain" description="C2 1" evidence="1">
    <location>
        <begin position="1"/>
        <end position="111"/>
    </location>
</feature>
<feature type="domain" description="C2 2" evidence="1">
    <location>
        <begin position="116"/>
        <end position="246"/>
    </location>
</feature>
<feature type="domain" description="VWFA">
    <location>
        <begin position="286"/>
        <end position="503"/>
    </location>
</feature>
<feature type="region of interest" description="Disordered" evidence="2">
    <location>
        <begin position="535"/>
        <end position="583"/>
    </location>
</feature>
<feature type="compositionally biased region" description="Low complexity" evidence="2">
    <location>
        <begin position="535"/>
        <end position="549"/>
    </location>
</feature>
<feature type="compositionally biased region" description="Polar residues" evidence="2">
    <location>
        <begin position="555"/>
        <end position="572"/>
    </location>
</feature>
<feature type="binding site" evidence="1">
    <location>
        <position position="23"/>
    </location>
    <ligand>
        <name>Ca(2+)</name>
        <dbReference type="ChEBI" id="CHEBI:29108"/>
        <label>1</label>
    </ligand>
</feature>
<feature type="binding site" evidence="1">
    <location>
        <position position="23"/>
    </location>
    <ligand>
        <name>Ca(2+)</name>
        <dbReference type="ChEBI" id="CHEBI:29108"/>
        <label>2</label>
    </ligand>
</feature>
<feature type="binding site" evidence="1">
    <location>
        <position position="29"/>
    </location>
    <ligand>
        <name>Ca(2+)</name>
        <dbReference type="ChEBI" id="CHEBI:29108"/>
        <label>1</label>
    </ligand>
</feature>
<feature type="binding site" evidence="1">
    <location>
        <position position="82"/>
    </location>
    <ligand>
        <name>Ca(2+)</name>
        <dbReference type="ChEBI" id="CHEBI:29108"/>
        <label>1</label>
    </ligand>
</feature>
<feature type="binding site" evidence="1">
    <location>
        <position position="82"/>
    </location>
    <ligand>
        <name>Ca(2+)</name>
        <dbReference type="ChEBI" id="CHEBI:29108"/>
        <label>2</label>
    </ligand>
</feature>
<feature type="binding site" evidence="1">
    <location>
        <position position="84"/>
    </location>
    <ligand>
        <name>Ca(2+)</name>
        <dbReference type="ChEBI" id="CHEBI:29108"/>
        <label>1</label>
    </ligand>
</feature>
<feature type="binding site" evidence="1">
    <location>
        <position position="84"/>
    </location>
    <ligand>
        <name>Ca(2+)</name>
        <dbReference type="ChEBI" id="CHEBI:29108"/>
        <label>2</label>
    </ligand>
</feature>
<feature type="binding site" evidence="1">
    <location>
        <position position="89"/>
    </location>
    <ligand>
        <name>Ca(2+)</name>
        <dbReference type="ChEBI" id="CHEBI:29108"/>
        <label>2</label>
    </ligand>
</feature>
<feature type="binding site" evidence="1">
    <location>
        <position position="151"/>
    </location>
    <ligand>
        <name>Ca(2+)</name>
        <dbReference type="ChEBI" id="CHEBI:29108"/>
        <label>3</label>
    </ligand>
</feature>
<feature type="binding site" evidence="1">
    <location>
        <position position="151"/>
    </location>
    <ligand>
        <name>Ca(2+)</name>
        <dbReference type="ChEBI" id="CHEBI:29108"/>
        <label>4</label>
    </ligand>
</feature>
<feature type="binding site" evidence="1">
    <location>
        <position position="158"/>
    </location>
    <ligand>
        <name>Ca(2+)</name>
        <dbReference type="ChEBI" id="CHEBI:29108"/>
        <label>3</label>
    </ligand>
</feature>
<feature type="binding site" evidence="1">
    <location>
        <position position="215"/>
    </location>
    <ligand>
        <name>Ca(2+)</name>
        <dbReference type="ChEBI" id="CHEBI:29108"/>
        <label>3</label>
    </ligand>
</feature>
<feature type="binding site" evidence="1">
    <location>
        <position position="215"/>
    </location>
    <ligand>
        <name>Ca(2+)</name>
        <dbReference type="ChEBI" id="CHEBI:29108"/>
        <label>4</label>
    </ligand>
</feature>
<feature type="binding site" evidence="1">
    <location>
        <position position="217"/>
    </location>
    <ligand>
        <name>Ca(2+)</name>
        <dbReference type="ChEBI" id="CHEBI:29108"/>
        <label>3</label>
    </ligand>
</feature>
<feature type="binding site" evidence="1">
    <location>
        <position position="217"/>
    </location>
    <ligand>
        <name>Ca(2+)</name>
        <dbReference type="ChEBI" id="CHEBI:29108"/>
        <label>4</label>
    </ligand>
</feature>
<feature type="binding site" evidence="1">
    <location>
        <position position="223"/>
    </location>
    <ligand>
        <name>Ca(2+)</name>
        <dbReference type="ChEBI" id="CHEBI:29108"/>
        <label>4</label>
    </ligand>
</feature>
<sequence length="600" mass="65878">MNLKPPTSKVELRIKCHKILDKDTLSKSDPRASVYEKDRAGQFRLIGKTETIQNQLNPEFKTPIVIDYRFEEIQVLKFEIHDVDKNDEDFIGDASCTLTSILSKPGQTVCLQLLTKSGKHAGSMTVIAEEIKNTLQTIKFNLIGKKFDKKDLFGAGCDPYLIISRKVPSTNTFVKIYESQVQKGTLNPVFSGIEMKLEELCGGDMQREIKFEFYDWDRIGKHDYIGEFHTNAQELLQPNQAFNVINSHKQEKKSGYKNSGTVSVSDAVIEREYNFLEYIMGGCQMNLIVGIDCTASNGDSNDPNSLHYKNAQGLNQYANAICSVGNVIVPYTTTPLIPVYGFGGIMPGQSEVSHCFPMTLNASNTLCCGVNGVLDCYYDNISKIQLHGPTYFAPLINMAARYASQGQSQSNQKYTILMIITDGEILDADNTIDAIVKSSGLPLSIIIVGVGNANFTNMNILDGDDAALQSGGVRAERDIVQFVAMRDYLNRPNELAAEVLREIPTQFLSFMKKYKFRPNPPPPPPPVIIGAPPQYDNPTTTTTATSPSTGIDLNKGSNVGLNLTKTESSPSPSGGAGIDLNKGSVVDITKGVSNVSLEKN</sequence>
<protein>
    <recommendedName>
        <fullName>Copine-A</fullName>
    </recommendedName>
</protein>
<proteinExistence type="evidence at transcript level"/>
<dbReference type="EMBL" id="AY332759">
    <property type="protein sequence ID" value="AAP92687.1"/>
    <property type="molecule type" value="mRNA"/>
</dbReference>
<dbReference type="EMBL" id="AAFI02000199">
    <property type="protein sequence ID" value="EAL60856.1"/>
    <property type="molecule type" value="Genomic_DNA"/>
</dbReference>
<dbReference type="RefSeq" id="XP_629291.1">
    <property type="nucleotide sequence ID" value="XM_629289.1"/>
</dbReference>
<dbReference type="SMR" id="Q7YXU4"/>
<dbReference type="FunCoup" id="Q7YXU4">
    <property type="interactions" value="45"/>
</dbReference>
<dbReference type="STRING" id="44689.Q7YXU4"/>
<dbReference type="PaxDb" id="44689-DDB0215368"/>
<dbReference type="EnsemblProtists" id="EAL60856">
    <property type="protein sequence ID" value="EAL60856"/>
    <property type="gene ID" value="DDB_G0293008"/>
</dbReference>
<dbReference type="GeneID" id="8629014"/>
<dbReference type="KEGG" id="ddi:DDB_G0293008"/>
<dbReference type="dictyBase" id="DDB_G0293008">
    <property type="gene designation" value="cpnA"/>
</dbReference>
<dbReference type="VEuPathDB" id="AmoebaDB:DDB_G0293008"/>
<dbReference type="eggNOG" id="KOG1327">
    <property type="taxonomic scope" value="Eukaryota"/>
</dbReference>
<dbReference type="HOGENOM" id="CLU_020452_3_2_1"/>
<dbReference type="InParanoid" id="Q7YXU4"/>
<dbReference type="OMA" id="EMAAQCV"/>
<dbReference type="PhylomeDB" id="Q7YXU4"/>
<dbReference type="Reactome" id="R-DDI-1483206">
    <property type="pathway name" value="Glycerophospholipid biosynthesis"/>
</dbReference>
<dbReference type="Reactome" id="R-DDI-6798695">
    <property type="pathway name" value="Neutrophil degranulation"/>
</dbReference>
<dbReference type="Reactome" id="R-DDI-9013406">
    <property type="pathway name" value="RHOQ GTPase cycle"/>
</dbReference>
<dbReference type="PRO" id="PR:Q7YXU4"/>
<dbReference type="Proteomes" id="UP000002195">
    <property type="component" value="Chromosome 6"/>
</dbReference>
<dbReference type="GO" id="GO:0031164">
    <property type="term" value="C:contractile vacuolar membrane"/>
    <property type="evidence" value="ECO:0000314"/>
    <property type="project" value="dictyBase"/>
</dbReference>
<dbReference type="GO" id="GO:0005829">
    <property type="term" value="C:cytosol"/>
    <property type="evidence" value="ECO:0000314"/>
    <property type="project" value="dictyBase"/>
</dbReference>
<dbReference type="GO" id="GO:0031901">
    <property type="term" value="C:early endosome membrane"/>
    <property type="evidence" value="ECO:0000314"/>
    <property type="project" value="dictyBase"/>
</dbReference>
<dbReference type="GO" id="GO:0031902">
    <property type="term" value="C:late endosome membrane"/>
    <property type="evidence" value="ECO:0000314"/>
    <property type="project" value="dictyBase"/>
</dbReference>
<dbReference type="GO" id="GO:0030670">
    <property type="term" value="C:phagocytic vesicle membrane"/>
    <property type="evidence" value="ECO:0000314"/>
    <property type="project" value="dictyBase"/>
</dbReference>
<dbReference type="GO" id="GO:0005886">
    <property type="term" value="C:plasma membrane"/>
    <property type="evidence" value="ECO:0000314"/>
    <property type="project" value="dictyBase"/>
</dbReference>
<dbReference type="GO" id="GO:0051015">
    <property type="term" value="F:actin filament binding"/>
    <property type="evidence" value="ECO:0000314"/>
    <property type="project" value="dictyBase"/>
</dbReference>
<dbReference type="GO" id="GO:0005544">
    <property type="term" value="F:calcium-dependent phospholipid binding"/>
    <property type="evidence" value="ECO:0000314"/>
    <property type="project" value="dictyBase"/>
</dbReference>
<dbReference type="GO" id="GO:0046872">
    <property type="term" value="F:metal ion binding"/>
    <property type="evidence" value="ECO:0007669"/>
    <property type="project" value="UniProtKB-KW"/>
</dbReference>
<dbReference type="GO" id="GO:0071277">
    <property type="term" value="P:cellular response to calcium ion"/>
    <property type="evidence" value="ECO:0000314"/>
    <property type="project" value="dictyBase"/>
</dbReference>
<dbReference type="GO" id="GO:0070177">
    <property type="term" value="P:contractile vacuole discharge"/>
    <property type="evidence" value="ECO:0000315"/>
    <property type="project" value="dictyBase"/>
</dbReference>
<dbReference type="GO" id="GO:0033298">
    <property type="term" value="P:contractile vacuole organization"/>
    <property type="evidence" value="ECO:0000315"/>
    <property type="project" value="dictyBase"/>
</dbReference>
<dbReference type="GO" id="GO:0031154">
    <property type="term" value="P:culmination involved in sorocarp development"/>
    <property type="evidence" value="ECO:0000315"/>
    <property type="project" value="dictyBase"/>
</dbReference>
<dbReference type="GO" id="GO:0006971">
    <property type="term" value="P:hypotonic response"/>
    <property type="evidence" value="ECO:0000315"/>
    <property type="project" value="dictyBase"/>
</dbReference>
<dbReference type="GO" id="GO:0000281">
    <property type="term" value="P:mitotic cytokinesis"/>
    <property type="evidence" value="ECO:0000315"/>
    <property type="project" value="dictyBase"/>
</dbReference>
<dbReference type="GO" id="GO:0045920">
    <property type="term" value="P:negative regulation of exocytosis"/>
    <property type="evidence" value="ECO:0000315"/>
    <property type="project" value="dictyBase"/>
</dbReference>
<dbReference type="GO" id="GO:0046956">
    <property type="term" value="P:positive phototaxis"/>
    <property type="evidence" value="ECO:0000315"/>
    <property type="project" value="dictyBase"/>
</dbReference>
<dbReference type="GO" id="GO:0032956">
    <property type="term" value="P:regulation of actin cytoskeleton organization"/>
    <property type="evidence" value="ECO:0000314"/>
    <property type="project" value="dictyBase"/>
</dbReference>
<dbReference type="GO" id="GO:0031157">
    <property type="term" value="P:regulation of aggregate size involved in sorocarp development"/>
    <property type="evidence" value="ECO:0000315"/>
    <property type="project" value="dictyBase"/>
</dbReference>
<dbReference type="GO" id="GO:0044656">
    <property type="term" value="P:regulation of post-lysosomal vacuole size"/>
    <property type="evidence" value="ECO:0000315"/>
    <property type="project" value="dictyBase"/>
</dbReference>
<dbReference type="GO" id="GO:0060359">
    <property type="term" value="P:response to ammonium ion"/>
    <property type="evidence" value="ECO:0000315"/>
    <property type="project" value="dictyBase"/>
</dbReference>
<dbReference type="GO" id="GO:0051592">
    <property type="term" value="P:response to calcium ion"/>
    <property type="evidence" value="ECO:0000315"/>
    <property type="project" value="dictyBase"/>
</dbReference>
<dbReference type="GO" id="GO:0031149">
    <property type="term" value="P:sorocarp stalk cell differentiation"/>
    <property type="evidence" value="ECO:0000315"/>
    <property type="project" value="dictyBase"/>
</dbReference>
<dbReference type="GO" id="GO:0043052">
    <property type="term" value="P:thermotaxis"/>
    <property type="evidence" value="ECO:0000315"/>
    <property type="project" value="dictyBase"/>
</dbReference>
<dbReference type="CDD" id="cd04048">
    <property type="entry name" value="C2A_Copine"/>
    <property type="match status" value="1"/>
</dbReference>
<dbReference type="CDD" id="cd04047">
    <property type="entry name" value="C2B_Copine"/>
    <property type="match status" value="1"/>
</dbReference>
<dbReference type="FunFam" id="2.60.40.150:FF:000326">
    <property type="entry name" value="Copine i-like protein"/>
    <property type="match status" value="1"/>
</dbReference>
<dbReference type="FunFam" id="2.60.40.150:FF:000351">
    <property type="entry name" value="Copine-A"/>
    <property type="match status" value="1"/>
</dbReference>
<dbReference type="Gene3D" id="2.60.40.150">
    <property type="entry name" value="C2 domain"/>
    <property type="match status" value="2"/>
</dbReference>
<dbReference type="InterPro" id="IPR000008">
    <property type="entry name" value="C2_dom"/>
</dbReference>
<dbReference type="InterPro" id="IPR035892">
    <property type="entry name" value="C2_domain_sf"/>
</dbReference>
<dbReference type="InterPro" id="IPR037768">
    <property type="entry name" value="C2B_Copine"/>
</dbReference>
<dbReference type="InterPro" id="IPR045052">
    <property type="entry name" value="Copine"/>
</dbReference>
<dbReference type="InterPro" id="IPR010734">
    <property type="entry name" value="Copine_C"/>
</dbReference>
<dbReference type="InterPro" id="IPR002035">
    <property type="entry name" value="VWF_A"/>
</dbReference>
<dbReference type="InterPro" id="IPR036465">
    <property type="entry name" value="vWFA_dom_sf"/>
</dbReference>
<dbReference type="PANTHER" id="PTHR10857:SF106">
    <property type="entry name" value="C2 DOMAIN-CONTAINING PROTEIN"/>
    <property type="match status" value="1"/>
</dbReference>
<dbReference type="PANTHER" id="PTHR10857">
    <property type="entry name" value="COPINE"/>
    <property type="match status" value="1"/>
</dbReference>
<dbReference type="Pfam" id="PF00168">
    <property type="entry name" value="C2"/>
    <property type="match status" value="2"/>
</dbReference>
<dbReference type="Pfam" id="PF07002">
    <property type="entry name" value="Copine"/>
    <property type="match status" value="1"/>
</dbReference>
<dbReference type="SMART" id="SM00239">
    <property type="entry name" value="C2"/>
    <property type="match status" value="2"/>
</dbReference>
<dbReference type="SMART" id="SM00327">
    <property type="entry name" value="VWA"/>
    <property type="match status" value="1"/>
</dbReference>
<dbReference type="SUPFAM" id="SSF49562">
    <property type="entry name" value="C2 domain (Calcium/lipid-binding domain, CaLB)"/>
    <property type="match status" value="2"/>
</dbReference>
<dbReference type="SUPFAM" id="SSF53300">
    <property type="entry name" value="vWA-like"/>
    <property type="match status" value="1"/>
</dbReference>
<dbReference type="PROSITE" id="PS50004">
    <property type="entry name" value="C2"/>
    <property type="match status" value="2"/>
</dbReference>
<accession>Q7YXU4</accession>
<accession>Q54CC8</accession>
<organism>
    <name type="scientific">Dictyostelium discoideum</name>
    <name type="common">Social amoeba</name>
    <dbReference type="NCBI Taxonomy" id="44689"/>
    <lineage>
        <taxon>Eukaryota</taxon>
        <taxon>Amoebozoa</taxon>
        <taxon>Evosea</taxon>
        <taxon>Eumycetozoa</taxon>
        <taxon>Dictyostelia</taxon>
        <taxon>Dictyosteliales</taxon>
        <taxon>Dictyosteliaceae</taxon>
        <taxon>Dictyostelium</taxon>
    </lineage>
</organism>
<comment type="function">
    <text evidence="4">Required for cytokinesis, contractile vacuole function and development.</text>
</comment>
<comment type="cofactor">
    <cofactor evidence="1">
        <name>Ca(2+)</name>
        <dbReference type="ChEBI" id="CHEBI:29108"/>
    </cofactor>
</comment>
<comment type="subcellular location">
    <subcellularLocation>
        <location evidence="3">Cytoplasm</location>
    </subcellularLocation>
    <subcellularLocation>
        <location evidence="3">Membrane</location>
        <topology evidence="3">Peripheral membrane protein</topology>
    </subcellularLocation>
    <text>In starved cells it binds transiently and in a calcium-dependent manner to the plasma membrane and intracellular vacuoles. In some cells, the transient membrane localization is observed to occur multiple times in an oscillatory manner over several minutes. Also found to be associated to the plasma membrane, contractile vacuoles, organelles of the endolysosomal pathway and phagosomes.</text>
</comment>
<comment type="developmental stage">
    <text evidence="4">Expressed at relatively high levels in vegetative cells. The expression goes down at the second hour of development and increase slightly up to the 8th hour, it then goes down until the 12th hour where it increase gain to reach a maximal value at the 16th hour.</text>
</comment>
<comment type="disruption phenotype">
    <text evidence="4">Cells exhibit normal growth rates and a slight cytokinesis defect. When placed in starvation conditions these cells appear to aggregate into mounds and form fingers with normal timing; however, they are delayed or arrested in the finger stage. When placed in water the cells forme unusually large contractile vacuoles, indicating a defect in contractile vacuole function.</text>
</comment>
<comment type="similarity">
    <text evidence="5">Belongs to the copine family.</text>
</comment>